<comment type="function">
    <text evidence="2 3 7 11 12">Involved in the homologous recombination repair (HRR) pathway of double-stranded DNA, thought to repair chromosomal fragmentation, translocations and deletions. Part of the RAD51 paralog protein complex BCDX2 which acts in the BRCA1-BRCA2-dependent HR pathway. Upon DNA damage, BCDX2 acts downstream of BRCA2 recruitment and upstream of RAD51 recruitment. BCDX2 binds predominantly to the intersection of the four duplex arms of the Holliday junction and to junction of replication forks. The BCDX2 complex was originally reported to bind single-stranded DNA, single-stranded gaps in duplex DNA and specifically to nicks in duplex DNA.</text>
</comment>
<comment type="subunit">
    <text evidence="1 2 3 4 5 6">Interacts with RAD51D. Part of the BCDX2 complex consisting of RAD51B, RAD51C, RAD51D and XRCC2; the complex has a ring-like structure arranged into a flat disk around a central channel. In the absence of DNA, the BCDX2 subcomplex XRCC2:RAD51D formed a multimeric ring structure; in the presence of single-stranded DNA it formed a filamentous structure with the ssDNA.</text>
</comment>
<comment type="interaction">
    <interactant intactId="EBI-3918457">
        <id>O43543</id>
    </interactant>
    <interactant intactId="EBI-748397">
        <id>P50222</id>
        <label>MEOX2</label>
    </interactant>
    <organismsDiffer>false</organismsDiffer>
    <experiments>3</experiments>
</comment>
<comment type="interaction">
    <interactant intactId="EBI-3918457">
        <id>O43543</id>
    </interactant>
    <interactant intactId="EBI-2267048">
        <id>O43502</id>
        <label>RAD51C</label>
    </interactant>
    <organismsDiffer>false</organismsDiffer>
    <experiments>4</experiments>
</comment>
<comment type="interaction">
    <interactant intactId="EBI-3918457">
        <id>O43543</id>
    </interactant>
    <interactant intactId="EBI-1055693">
        <id>O75771</id>
        <label>RAD51D</label>
    </interactant>
    <organismsDiffer>false</organismsDiffer>
    <experiments>41</experiments>
</comment>
<comment type="subcellular location">
    <subcellularLocation>
        <location evidence="7">Nucleus</location>
    </subcellularLocation>
    <subcellularLocation>
        <location evidence="7">Cytoplasm</location>
        <location evidence="7">Cytoskeleton</location>
        <location evidence="7">Microtubule organizing center</location>
        <location evidence="7">Centrosome</location>
    </subcellularLocation>
</comment>
<comment type="disease" evidence="8">
    <disease id="DI-04905">
        <name>Fanconi anemia, complementation group U</name>
        <acronym>FANCU</acronym>
        <description>A disorder affecting all bone marrow elements and resulting in anemia, leukopenia and thrombopenia. It is associated with cardiac, renal and limb malformations, dermal pigmentary changes, and a predisposition to the development of malignancies. At the cellular level it is associated with hypersensitivity to DNA-damaging agents, chromosomal instability (increased chromosome breakage) and defective DNA repair.</description>
        <dbReference type="MIM" id="617247"/>
    </disease>
    <text>The disease is caused by variants affecting the gene represented in this entry.</text>
</comment>
<comment type="disease" evidence="13">
    <disease id="DI-05977">
        <name>Spermatogenic failure 50</name>
        <acronym>SPGF50</acronym>
        <description>An autosomal recessive infertility disorder characterized by azoospermia due to meiotic arrest at the zygotene stage of prophase I.</description>
        <dbReference type="MIM" id="619145"/>
    </disease>
    <text>The disease is caused by variants affecting the gene represented in this entry.</text>
</comment>
<comment type="disease" evidence="15">
    <disease id="DI-05974">
        <name>Premature ovarian failure 17</name>
        <acronym>POF17</acronym>
        <description>A form of premature ovarian failure, an ovarian disorder defined as the cessation of ovarian function under the age of 40 years. It is characterized by oligomenorrhea or amenorrhea, in the presence of elevated levels of serum gonadotropins and low estradiol. POF17 transmission pattern is consistent with autosomal recessive inheritance.</description>
        <dbReference type="MIM" id="619146"/>
    </disease>
    <text>The disease is caused by variants affecting the gene represented in this entry.</text>
</comment>
<comment type="similarity">
    <text evidence="17">Belongs to the RecA family. RAD51 subfamily.</text>
</comment>
<accession>O43543</accession>
<accession>B2R925</accession>
<keyword id="KW-0002">3D-structure</keyword>
<keyword id="KW-0963">Cytoplasm</keyword>
<keyword id="KW-0206">Cytoskeleton</keyword>
<keyword id="KW-0225">Disease variant</keyword>
<keyword id="KW-0227">DNA damage</keyword>
<keyword id="KW-0233">DNA recombination</keyword>
<keyword id="KW-0234">DNA repair</keyword>
<keyword id="KW-0238">DNA-binding</keyword>
<keyword id="KW-0923">Fanconi anemia</keyword>
<keyword id="KW-0539">Nucleus</keyword>
<keyword id="KW-0597">Phosphoprotein</keyword>
<keyword id="KW-1066">Premature ovarian failure</keyword>
<keyword id="KW-1267">Proteomics identification</keyword>
<keyword id="KW-1185">Reference proteome</keyword>
<reference key="1">
    <citation type="journal article" date="1998" name="Mol. Cell">
        <title>XRCC2 and XRCC3, new human Rad51-family members, promote chromosome stability and protect against DNA cross-links and other damages.</title>
        <authorList>
            <person name="Liu N."/>
            <person name="Lamerdin J.E."/>
            <person name="Tebbs R.S."/>
            <person name="Schild D."/>
            <person name="Tucker J.D."/>
            <person name="Shen M.R."/>
            <person name="Brookman K.W."/>
            <person name="Siciliano M.J."/>
            <person name="Walter C.A."/>
            <person name="Fan W."/>
            <person name="Narayana L.S."/>
            <person name="Zhou Z.-Q."/>
            <person name="Adamson A.W."/>
            <person name="Sorensen K.J."/>
            <person name="Chen D.J."/>
            <person name="Jones N.J."/>
            <person name="Thompson L.H."/>
        </authorList>
    </citation>
    <scope>NUCLEOTIDE SEQUENCE [GENOMIC DNA / MRNA]</scope>
    <source>
        <tissue>Cervix carcinoma</tissue>
    </source>
</reference>
<reference key="2">
    <citation type="journal article" date="1997" name="Genomics">
        <title>The XRCC2 DNA repair gene: identification of a positional candidate.</title>
        <authorList>
            <person name="Tambini C.E."/>
            <person name="George A.M."/>
            <person name="Rommens J.M."/>
            <person name="Tsui L.-C."/>
            <person name="Scherer S.W."/>
            <person name="Thacker J."/>
        </authorList>
    </citation>
    <scope>NUCLEOTIDE SEQUENCE [MRNA]</scope>
</reference>
<reference key="3">
    <citation type="journal article" date="1998" name="Nucleic Acids Res.">
        <title>The XRCC2 DNA repair gene from human and mouse encodes a novel member of the recA/RAD51 family.</title>
        <authorList>
            <person name="Cartwright R."/>
            <person name="Tambini C.E."/>
            <person name="Simpson P.J."/>
            <person name="Thacker J."/>
        </authorList>
    </citation>
    <scope>NUCLEOTIDE SEQUENCE [GENOMIC DNA / MRNA]</scope>
    <source>
        <tissue>Cervix carcinoma</tissue>
    </source>
</reference>
<reference key="4">
    <citation type="submission" date="2002-06" db="EMBL/GenBank/DDBJ databases">
        <authorList>
            <consortium name="NIEHS SNPs program"/>
        </authorList>
    </citation>
    <scope>NUCLEOTIDE SEQUENCE [GENOMIC DNA]</scope>
    <scope>VARIANTS HIS-188 AND THR-221</scope>
</reference>
<reference key="5">
    <citation type="journal article" date="2004" name="Nat. Genet.">
        <title>Complete sequencing and characterization of 21,243 full-length human cDNAs.</title>
        <authorList>
            <person name="Ota T."/>
            <person name="Suzuki Y."/>
            <person name="Nishikawa T."/>
            <person name="Otsuki T."/>
            <person name="Sugiyama T."/>
            <person name="Irie R."/>
            <person name="Wakamatsu A."/>
            <person name="Hayashi K."/>
            <person name="Sato H."/>
            <person name="Nagai K."/>
            <person name="Kimura K."/>
            <person name="Makita H."/>
            <person name="Sekine M."/>
            <person name="Obayashi M."/>
            <person name="Nishi T."/>
            <person name="Shibahara T."/>
            <person name="Tanaka T."/>
            <person name="Ishii S."/>
            <person name="Yamamoto J."/>
            <person name="Saito K."/>
            <person name="Kawai Y."/>
            <person name="Isono Y."/>
            <person name="Nakamura Y."/>
            <person name="Nagahari K."/>
            <person name="Murakami K."/>
            <person name="Yasuda T."/>
            <person name="Iwayanagi T."/>
            <person name="Wagatsuma M."/>
            <person name="Shiratori A."/>
            <person name="Sudo H."/>
            <person name="Hosoiri T."/>
            <person name="Kaku Y."/>
            <person name="Kodaira H."/>
            <person name="Kondo H."/>
            <person name="Sugawara M."/>
            <person name="Takahashi M."/>
            <person name="Kanda K."/>
            <person name="Yokoi T."/>
            <person name="Furuya T."/>
            <person name="Kikkawa E."/>
            <person name="Omura Y."/>
            <person name="Abe K."/>
            <person name="Kamihara K."/>
            <person name="Katsuta N."/>
            <person name="Sato K."/>
            <person name="Tanikawa M."/>
            <person name="Yamazaki M."/>
            <person name="Ninomiya K."/>
            <person name="Ishibashi T."/>
            <person name="Yamashita H."/>
            <person name="Murakawa K."/>
            <person name="Fujimori K."/>
            <person name="Tanai H."/>
            <person name="Kimata M."/>
            <person name="Watanabe M."/>
            <person name="Hiraoka S."/>
            <person name="Chiba Y."/>
            <person name="Ishida S."/>
            <person name="Ono Y."/>
            <person name="Takiguchi S."/>
            <person name="Watanabe S."/>
            <person name="Yosida M."/>
            <person name="Hotuta T."/>
            <person name="Kusano J."/>
            <person name="Kanehori K."/>
            <person name="Takahashi-Fujii A."/>
            <person name="Hara H."/>
            <person name="Tanase T.-O."/>
            <person name="Nomura Y."/>
            <person name="Togiya S."/>
            <person name="Komai F."/>
            <person name="Hara R."/>
            <person name="Takeuchi K."/>
            <person name="Arita M."/>
            <person name="Imose N."/>
            <person name="Musashino K."/>
            <person name="Yuuki H."/>
            <person name="Oshima A."/>
            <person name="Sasaki N."/>
            <person name="Aotsuka S."/>
            <person name="Yoshikawa Y."/>
            <person name="Matsunawa H."/>
            <person name="Ichihara T."/>
            <person name="Shiohata N."/>
            <person name="Sano S."/>
            <person name="Moriya S."/>
            <person name="Momiyama H."/>
            <person name="Satoh N."/>
            <person name="Takami S."/>
            <person name="Terashima Y."/>
            <person name="Suzuki O."/>
            <person name="Nakagawa S."/>
            <person name="Senoh A."/>
            <person name="Mizoguchi H."/>
            <person name="Goto Y."/>
            <person name="Shimizu F."/>
            <person name="Wakebe H."/>
            <person name="Hishigaki H."/>
            <person name="Watanabe T."/>
            <person name="Sugiyama A."/>
            <person name="Takemoto M."/>
            <person name="Kawakami B."/>
            <person name="Yamazaki M."/>
            <person name="Watanabe K."/>
            <person name="Kumagai A."/>
            <person name="Itakura S."/>
            <person name="Fukuzumi Y."/>
            <person name="Fujimori Y."/>
            <person name="Komiyama M."/>
            <person name="Tashiro H."/>
            <person name="Tanigami A."/>
            <person name="Fujiwara T."/>
            <person name="Ono T."/>
            <person name="Yamada K."/>
            <person name="Fujii Y."/>
            <person name="Ozaki K."/>
            <person name="Hirao M."/>
            <person name="Ohmori Y."/>
            <person name="Kawabata A."/>
            <person name="Hikiji T."/>
            <person name="Kobatake N."/>
            <person name="Inagaki H."/>
            <person name="Ikema Y."/>
            <person name="Okamoto S."/>
            <person name="Okitani R."/>
            <person name="Kawakami T."/>
            <person name="Noguchi S."/>
            <person name="Itoh T."/>
            <person name="Shigeta K."/>
            <person name="Senba T."/>
            <person name="Matsumura K."/>
            <person name="Nakajima Y."/>
            <person name="Mizuno T."/>
            <person name="Morinaga M."/>
            <person name="Sasaki M."/>
            <person name="Togashi T."/>
            <person name="Oyama M."/>
            <person name="Hata H."/>
            <person name="Watanabe M."/>
            <person name="Komatsu T."/>
            <person name="Mizushima-Sugano J."/>
            <person name="Satoh T."/>
            <person name="Shirai Y."/>
            <person name="Takahashi Y."/>
            <person name="Nakagawa K."/>
            <person name="Okumura K."/>
            <person name="Nagase T."/>
            <person name="Nomura N."/>
            <person name="Kikuchi H."/>
            <person name="Masuho Y."/>
            <person name="Yamashita R."/>
            <person name="Nakai K."/>
            <person name="Yada T."/>
            <person name="Nakamura Y."/>
            <person name="Ohara O."/>
            <person name="Isogai T."/>
            <person name="Sugano S."/>
        </authorList>
    </citation>
    <scope>NUCLEOTIDE SEQUENCE [LARGE SCALE MRNA]</scope>
    <source>
        <tissue>Testis</tissue>
    </source>
</reference>
<reference key="6">
    <citation type="submission" date="2005-09" db="EMBL/GenBank/DDBJ databases">
        <authorList>
            <person name="Mural R.J."/>
            <person name="Istrail S."/>
            <person name="Sutton G.G."/>
            <person name="Florea L."/>
            <person name="Halpern A.L."/>
            <person name="Mobarry C.M."/>
            <person name="Lippert R."/>
            <person name="Walenz B."/>
            <person name="Shatkay H."/>
            <person name="Dew I."/>
            <person name="Miller J.R."/>
            <person name="Flanigan M.J."/>
            <person name="Edwards N.J."/>
            <person name="Bolanos R."/>
            <person name="Fasulo D."/>
            <person name="Halldorsson B.V."/>
            <person name="Hannenhalli S."/>
            <person name="Turner R."/>
            <person name="Yooseph S."/>
            <person name="Lu F."/>
            <person name="Nusskern D.R."/>
            <person name="Shue B.C."/>
            <person name="Zheng X.H."/>
            <person name="Zhong F."/>
            <person name="Delcher A.L."/>
            <person name="Huson D.H."/>
            <person name="Kravitz S.A."/>
            <person name="Mouchard L."/>
            <person name="Reinert K."/>
            <person name="Remington K.A."/>
            <person name="Clark A.G."/>
            <person name="Waterman M.S."/>
            <person name="Eichler E.E."/>
            <person name="Adams M.D."/>
            <person name="Hunkapiller M.W."/>
            <person name="Myers E.W."/>
            <person name="Venter J.C."/>
        </authorList>
    </citation>
    <scope>NUCLEOTIDE SEQUENCE [LARGE SCALE GENOMIC DNA]</scope>
</reference>
<reference key="7">
    <citation type="journal article" date="2004" name="Genome Res.">
        <title>The status, quality, and expansion of the NIH full-length cDNA project: the Mammalian Gene Collection (MGC).</title>
        <authorList>
            <consortium name="The MGC Project Team"/>
        </authorList>
    </citation>
    <scope>NUCLEOTIDE SEQUENCE [LARGE SCALE MRNA]</scope>
    <source>
        <tissue>Brain</tissue>
    </source>
</reference>
<reference key="8">
    <citation type="journal article" date="2001" name="Genes Dev.">
        <title>Identification and purification of two distinct complexes containing the five RAD51 paralogs.</title>
        <authorList>
            <person name="Masson J.Y."/>
            <person name="Tarsounas M.C."/>
            <person name="Stasiak A.Z."/>
            <person name="Stasiak A."/>
            <person name="Shah R."/>
            <person name="McIlwraith M.J."/>
            <person name="Benson F.E."/>
            <person name="West S.C."/>
        </authorList>
    </citation>
    <scope>FUNCTION</scope>
    <scope>IDENTIFICATION IN THE BCDX2 COMPLEX WITH RAD51C; RAD51D AND XRCC2</scope>
</reference>
<reference key="9">
    <citation type="journal article" date="2002" name="J. Biol. Chem.">
        <title>RAD51C interacts with RAD51B and is central to a larger protein complex in vivo exclusive of RAD51.</title>
        <authorList>
            <person name="Miller K.A."/>
            <person name="Yoshikawa D.M."/>
            <person name="McConnell I.R."/>
            <person name="Clark R."/>
            <person name="Schild D."/>
            <person name="Albala J.S."/>
        </authorList>
    </citation>
    <scope>SUBUNIT</scope>
</reference>
<reference key="10">
    <citation type="journal article" date="2002" name="J. Biol. Chem.">
        <title>Homologous pairing and ring and filament structure formation activities of the human Xrcc2*Rad51D complex.</title>
        <authorList>
            <person name="Kurumizaka H."/>
            <person name="Ikawa S."/>
            <person name="Nakada M."/>
            <person name="Enomoto R."/>
            <person name="Kagawa W."/>
            <person name="Kinebuchi T."/>
            <person name="Yamazoe M."/>
            <person name="Yokoyama S."/>
            <person name="Shibata T."/>
        </authorList>
    </citation>
    <scope>FUNCTION</scope>
    <scope>SUBUNIT</scope>
</reference>
<reference key="11">
    <citation type="journal article" date="2002" name="Nucleic Acids Res.">
        <title>Interactions involving the Rad51 paralogs Rad51C and XRCC3 in human cells.</title>
        <authorList>
            <person name="Wiese C."/>
            <person name="Collins D.W."/>
            <person name="Albala J.S."/>
            <person name="Thompson L.H."/>
            <person name="Kronenberg A."/>
            <person name="Schild D."/>
        </authorList>
    </citation>
    <scope>IDENTIFICATION IN A COMPLEX WITH RAD51B; RAD51C AND RAD51D</scope>
</reference>
<reference key="12">
    <citation type="journal article" date="2002" name="Nucleic Acids Res.">
        <title>Involvement of Rad51C in two distinct protein complexes of Rad51 paralogs in human cells.</title>
        <authorList>
            <person name="Liu N."/>
            <person name="Schild D."/>
            <person name="Thelen M.P."/>
            <person name="Thompson L.H."/>
        </authorList>
    </citation>
    <scope>IDENTIFICATION IN A COMPLEX WITH RAD51B; RAD51C AND RAD51D</scope>
</reference>
<reference key="13">
    <citation type="journal article" date="2004" name="Nucleic Acids Res.">
        <title>Domain mapping of the Rad51 paralog protein complexes.</title>
        <authorList>
            <person name="Miller K.A."/>
            <person name="Sawicka D."/>
            <person name="Barsky D."/>
            <person name="Albala J.S."/>
        </authorList>
    </citation>
    <scope>INTERACTION WITH RAD51D</scope>
</reference>
<reference key="14">
    <citation type="journal article" date="2011" name="Exp. Cell Res.">
        <title>Homologous recombination proteins are associated with centrosomes and are required for mitotic stability.</title>
        <authorList>
            <person name="Cappelli E."/>
            <person name="Townsend S."/>
            <person name="Griffin C."/>
            <person name="Thacker J."/>
        </authorList>
    </citation>
    <scope>FUNCTION</scope>
    <scope>SUBCELLULAR LOCATION</scope>
</reference>
<reference key="15">
    <citation type="journal article" date="2013" name="J. Proteome Res.">
        <title>Toward a comprehensive characterization of a human cancer cell phosphoproteome.</title>
        <authorList>
            <person name="Zhou H."/>
            <person name="Di Palma S."/>
            <person name="Preisinger C."/>
            <person name="Peng M."/>
            <person name="Polat A.N."/>
            <person name="Heck A.J."/>
            <person name="Mohammed S."/>
        </authorList>
    </citation>
    <scope>PHOSPHORYLATION [LARGE SCALE ANALYSIS] AT SER-10</scope>
    <scope>IDENTIFICATION BY MASS SPECTROMETRY [LARGE SCALE ANALYSIS]</scope>
    <source>
        <tissue>Cervix carcinoma</tissue>
        <tissue>Erythroleukemia</tissue>
    </source>
</reference>
<reference key="16">
    <citation type="journal article" date="2013" name="Mol. Cell. Biol.">
        <title>Rad51 paralog complexes BCDX2 and CX3 act at different stages in the BRCA1-BRCA2-dependent homologous recombination pathway.</title>
        <authorList>
            <person name="Chun J."/>
            <person name="Buechelmaier E.S."/>
            <person name="Powell S.N."/>
        </authorList>
    </citation>
    <scope>FUNCTION OF THE BCDX2 COMPLEX</scope>
</reference>
<reference key="17">
    <citation type="journal article" date="2010" name="J. Biol. Chem.">
        <title>Ring-shaped Rad51 paralog protein complexes bind Holliday junctions and replication forks as visualized by electron microscopy.</title>
        <authorList>
            <person name="Compton S.A."/>
            <person name="Ozgur S."/>
            <person name="Griffith J.D."/>
        </authorList>
    </citation>
    <scope>ELECTRON MICROSCOPY OF THE BCDX2 COMPLEX</scope>
    <scope>DNA-BINDING OF THE BCDX2 COMPLEX</scope>
</reference>
<reference key="18">
    <citation type="journal article" date="2012" name="Am. J. Hum. Genet.">
        <title>Rare mutations in XRCC2 increase the risk of breast cancer.</title>
        <authorList>
            <consortium name="Breast Cancer Family Registry"/>
            <consortium name="Kathleen Cuningham Foundation Consortium for Research into Familial Breast Cancer"/>
            <person name="Park D.J."/>
            <person name="Lesueur F."/>
            <person name="Nguyen-Dumont T."/>
            <person name="Pertesi M."/>
            <person name="Odefrey F."/>
            <person name="Hammet F."/>
            <person name="Neuhausen S.L."/>
            <person name="John E.M."/>
            <person name="Andrulis I.L."/>
            <person name="Terry M.B."/>
            <person name="Daly M."/>
            <person name="Buys S."/>
            <person name="Le Calvez-Kelm F."/>
            <person name="Lonie A."/>
            <person name="Pope B.J."/>
            <person name="Tsimiklis H."/>
            <person name="Voegele C."/>
            <person name="Hilbers F.M."/>
            <person name="Hoogerbrugge N."/>
            <person name="Barroso A."/>
            <person name="Osorio A."/>
            <person name="Giles G.G."/>
            <person name="Devilee P."/>
            <person name="Benitez J."/>
            <person name="Hopper J.L."/>
            <person name="Tavtigian S.V."/>
            <person name="Goldgar D.E."/>
            <person name="Southey M.C."/>
        </authorList>
    </citation>
    <scope>VARIANTS SER-16; ILE-61; TRP-91; VAL-95; CYS-231 AND VAL-270</scope>
</reference>
<reference key="19">
    <citation type="journal article" date="2012" name="J. Med. Genet.">
        <title>Exome sequencing reveals a novel Fanconi group defined by XRCC2 mutation.</title>
        <authorList>
            <person name="Shamseldin H.E."/>
            <person name="Elfaki M."/>
            <person name="Alkuraya F.S."/>
        </authorList>
    </citation>
    <scope>INVOLVEMENT IN FANCU</scope>
</reference>
<reference key="20">
    <citation type="journal article" date="2012" name="J. Med. Genet.">
        <title>Rare variants in XRCC2 as breast cancer susceptibility alleles.</title>
        <authorList>
            <person name="Hilbers F.S."/>
            <person name="Wijnen J.T."/>
            <person name="Hoogerbrugge N."/>
            <person name="Oosterwijk J.C."/>
            <person name="Collee M.J."/>
            <person name="Peterlongo P."/>
            <person name="Radice P."/>
            <person name="Manoukian S."/>
            <person name="Feroce I."/>
            <person name="Capra F."/>
            <person name="Couch F.J."/>
            <person name="Wang X."/>
            <person name="Guidugli L."/>
            <person name="Offit K."/>
            <person name="Shah S."/>
            <person name="Campbell I.G."/>
            <person name="Thompson E.R."/>
            <person name="James P.A."/>
            <person name="Trainer A.H."/>
            <person name="Gracia J."/>
            <person name="Benitez J."/>
            <person name="van Asperen C.J."/>
            <person name="Devilee P."/>
        </authorList>
    </citation>
    <scope>VARIANTS ARG-47; GLN-75; VAL-95; ALA-118; TYR-120; PRO-133; GLN-164; ALA-170; CYS-188; MET-194; LEU-199; GLY-207; VAL-220; SER-238; GLU-248; CYS-258 AND VAL-270</scope>
</reference>
<reference key="21">
    <citation type="journal article" date="2016" name="Hum. Mutat.">
        <title>Functional analysis of missense variants in the putative breast cancer susceptibility gene XRCC2.</title>
        <authorList>
            <person name="Hilbers F.S."/>
            <person name="Luijsterburg M.S."/>
            <person name="Wiegant W.W."/>
            <person name="Meijers C.M."/>
            <person name="Voelker-Albert M."/>
            <person name="Boonen R.A."/>
            <person name="van Asperen C.J."/>
            <person name="Devilee P."/>
            <person name="van Attikum H."/>
        </authorList>
    </citation>
    <scope>VARIANTS SER-16; ARG-47; ILE-61; GLN-75; TRP-91; VAL-95; ALA-118; TYR-120; PRO-133; GLN-164; ALA-170; CYS-188; HIS-188; MET-194; LEU-199; GLY-207; VAL-220; CYS-231; SER-238; GLU-248; CYS-258 AND VAL-270</scope>
    <scope>FUNCTION</scope>
    <scope>CHARACTERIZATION OF VARIANTS SER-16; ARG-47; ILE-61; GLN-75; TRP-91; VAL-95; ALA-118; TYR-120; PRO-133; GLN-164; ALA-170; CYS-188; HIS-188; MET-194; LEU-199; GLY-207; VAL-220; CYS-231; SER-238; GLU-248; CYS-258 AND VAL-270</scope>
</reference>
<reference key="22">
    <citation type="journal article" date="2018" name="J. Med. Genet.">
        <title>XRCC2 mutation causes meiotic arrest, azoospermia and infertility.</title>
        <authorList>
            <person name="Yang Y."/>
            <person name="Guo J."/>
            <person name="Dai L."/>
            <person name="Zhu Y."/>
            <person name="Hu H."/>
            <person name="Tan L."/>
            <person name="Chen W."/>
            <person name="Liang D."/>
            <person name="He J."/>
            <person name="Tu M."/>
            <person name="Wang K."/>
            <person name="Wu L."/>
        </authorList>
    </citation>
    <scope>VARIANT SPGF50 PRO-14</scope>
    <scope>INVOLVEMENT IN SPGF50</scope>
</reference>
<reference key="23">
    <citation type="journal article" date="2019" name="Clin. Genet.">
        <title>XRCC2 mutation causes premature ovarian insufficiency as well as non-obstructive azoospermia in humans.</title>
        <authorList>
            <person name="Zhang Y.X."/>
            <person name="Li H.Y."/>
            <person name="He W.B."/>
            <person name="Tu C."/>
            <person name="Du J."/>
            <person name="Li W."/>
            <person name="Lu G.X."/>
            <person name="Lin G."/>
            <person name="Yang Y."/>
            <person name="Tan Y.Q."/>
        </authorList>
    </citation>
    <scope>VARIANT POF17 PRO-14</scope>
    <scope>INVOLVEMENT IN POF17</scope>
</reference>
<reference key="24">
    <citation type="journal article" date="2019" name="Genet. Med.">
        <title>Autozygome and high throughput confirmation of disease genes candidacy.</title>
        <authorList>
            <person name="Maddirevula S."/>
            <person name="Alzahrani F."/>
            <person name="Al-Owain M."/>
            <person name="Al Muhaizea M.A."/>
            <person name="Kayyali H.R."/>
            <person name="AlHashem A."/>
            <person name="Rahbeeni Z."/>
            <person name="Al-Otaibi M."/>
            <person name="Alzaidan H.I."/>
            <person name="Balobaid A."/>
            <person name="El Khashab H.Y."/>
            <person name="Bubshait D.K."/>
            <person name="Faden M."/>
            <person name="Yamani S.A."/>
            <person name="Dabbagh O."/>
            <person name="Al-Mureikhi M."/>
            <person name="Jasser A.A."/>
            <person name="Alsaif H.S."/>
            <person name="Alluhaydan I."/>
            <person name="Seidahmed M.Z."/>
            <person name="Alabbasi B.H."/>
            <person name="Almogarri I."/>
            <person name="Kurdi W."/>
            <person name="Akleh H."/>
            <person name="Qari A."/>
            <person name="Al Tala S.M."/>
            <person name="Alhomaidi S."/>
            <person name="Kentab A.Y."/>
            <person name="Salih M.A."/>
            <person name="Chedrawi A."/>
            <person name="Alameer S."/>
            <person name="Tabarki B."/>
            <person name="Shamseldin H.E."/>
            <person name="Patel N."/>
            <person name="Ibrahim N."/>
            <person name="Abdulwahab F."/>
            <person name="Samira M."/>
            <person name="Goljan E."/>
            <person name="Abouelhoda M."/>
            <person name="Meyer B.F."/>
            <person name="Hashem M."/>
            <person name="Shaheen R."/>
            <person name="AlShahwan S."/>
            <person name="Alfadhel M."/>
            <person name="Ben-Omran T."/>
            <person name="Al-Qattan M.M."/>
            <person name="Monies D."/>
            <person name="Alkuraya F.S."/>
        </authorList>
    </citation>
    <scope>VARIANT 215-ARG--CYS-280 DEL</scope>
</reference>
<dbReference type="EMBL" id="AF035587">
    <property type="protein sequence ID" value="AAC05369.1"/>
    <property type="molecule type" value="mRNA"/>
</dbReference>
<dbReference type="EMBL" id="AC003109">
    <property type="protein sequence ID" value="AAC05802.1"/>
    <property type="molecule type" value="Genomic_DNA"/>
</dbReference>
<dbReference type="EMBL" id="Y08837">
    <property type="protein sequence ID" value="CAA70065.1"/>
    <property type="molecule type" value="mRNA"/>
</dbReference>
<dbReference type="EMBL" id="Y17033">
    <property type="protein sequence ID" value="CAA76597.1"/>
    <property type="molecule type" value="Genomic_DNA"/>
</dbReference>
<dbReference type="EMBL" id="AF520762">
    <property type="protein sequence ID" value="AAM55241.1"/>
    <property type="molecule type" value="Genomic_DNA"/>
</dbReference>
<dbReference type="EMBL" id="AK313607">
    <property type="protein sequence ID" value="BAG36372.1"/>
    <property type="molecule type" value="mRNA"/>
</dbReference>
<dbReference type="EMBL" id="CH471173">
    <property type="protein sequence ID" value="EAW53968.1"/>
    <property type="molecule type" value="Genomic_DNA"/>
</dbReference>
<dbReference type="EMBL" id="BC042137">
    <property type="protein sequence ID" value="AAH42137.1"/>
    <property type="molecule type" value="mRNA"/>
</dbReference>
<dbReference type="CCDS" id="CCDS5933.1"/>
<dbReference type="RefSeq" id="NP_005422.1">
    <property type="nucleotide sequence ID" value="NM_005431.2"/>
</dbReference>
<dbReference type="PDB" id="8FAZ">
    <property type="method" value="EM"/>
    <property type="resolution" value="2.30 A"/>
    <property type="chains" value="X=1-280"/>
</dbReference>
<dbReference type="PDB" id="8GBJ">
    <property type="method" value="EM"/>
    <property type="resolution" value="3.11 A"/>
    <property type="chains" value="X=1-280"/>
</dbReference>
<dbReference type="PDB" id="8OUY">
    <property type="method" value="EM"/>
    <property type="resolution" value="3.40 A"/>
    <property type="chains" value="D=1-280"/>
</dbReference>
<dbReference type="PDB" id="8OUZ">
    <property type="method" value="EM"/>
    <property type="resolution" value="2.20 A"/>
    <property type="chains" value="D=2-280"/>
</dbReference>
<dbReference type="PDBsum" id="8FAZ"/>
<dbReference type="PDBsum" id="8GBJ"/>
<dbReference type="PDBsum" id="8OUY"/>
<dbReference type="PDBsum" id="8OUZ"/>
<dbReference type="EMDB" id="EMD-17205"/>
<dbReference type="EMDB" id="EMD-17206"/>
<dbReference type="EMDB" id="EMD-28961"/>
<dbReference type="EMDB" id="EMD-29917"/>
<dbReference type="SMR" id="O43543"/>
<dbReference type="BioGRID" id="113350">
    <property type="interactions" value="29"/>
</dbReference>
<dbReference type="ComplexPortal" id="CPX-2363">
    <property type="entry name" value="BCDX2 complex"/>
</dbReference>
<dbReference type="CORUM" id="O43543"/>
<dbReference type="DIP" id="DIP-24242N"/>
<dbReference type="FunCoup" id="O43543">
    <property type="interactions" value="1802"/>
</dbReference>
<dbReference type="IntAct" id="O43543">
    <property type="interactions" value="19"/>
</dbReference>
<dbReference type="MINT" id="O43543"/>
<dbReference type="STRING" id="9606.ENSP00000352271"/>
<dbReference type="iPTMnet" id="O43543"/>
<dbReference type="PhosphoSitePlus" id="O43543"/>
<dbReference type="BioMuta" id="XRCC2"/>
<dbReference type="jPOST" id="O43543"/>
<dbReference type="MassIVE" id="O43543"/>
<dbReference type="PaxDb" id="9606-ENSP00000352271"/>
<dbReference type="PeptideAtlas" id="O43543"/>
<dbReference type="ProteomicsDB" id="49042"/>
<dbReference type="Pumba" id="O43543"/>
<dbReference type="Antibodypedia" id="18833">
    <property type="antibodies" value="371 antibodies from 36 providers"/>
</dbReference>
<dbReference type="DNASU" id="7516"/>
<dbReference type="Ensembl" id="ENST00000359321.2">
    <property type="protein sequence ID" value="ENSP00000352271.1"/>
    <property type="gene ID" value="ENSG00000196584.4"/>
</dbReference>
<dbReference type="GeneID" id="7516"/>
<dbReference type="KEGG" id="hsa:7516"/>
<dbReference type="MANE-Select" id="ENST00000359321.2">
    <property type="protein sequence ID" value="ENSP00000352271.1"/>
    <property type="RefSeq nucleotide sequence ID" value="NM_005431.2"/>
    <property type="RefSeq protein sequence ID" value="NP_005422.1"/>
</dbReference>
<dbReference type="UCSC" id="uc003wld.4">
    <property type="organism name" value="human"/>
</dbReference>
<dbReference type="AGR" id="HGNC:12829"/>
<dbReference type="CTD" id="7516"/>
<dbReference type="DisGeNET" id="7516"/>
<dbReference type="GeneCards" id="XRCC2"/>
<dbReference type="GeneReviews" id="XRCC2"/>
<dbReference type="HGNC" id="HGNC:12829">
    <property type="gene designation" value="XRCC2"/>
</dbReference>
<dbReference type="HPA" id="ENSG00000196584">
    <property type="expression patterns" value="Tissue enhanced (bone)"/>
</dbReference>
<dbReference type="MalaCards" id="XRCC2"/>
<dbReference type="MIM" id="600375">
    <property type="type" value="gene"/>
</dbReference>
<dbReference type="MIM" id="617247">
    <property type="type" value="phenotype"/>
</dbReference>
<dbReference type="MIM" id="619145">
    <property type="type" value="phenotype"/>
</dbReference>
<dbReference type="MIM" id="619146">
    <property type="type" value="phenotype"/>
</dbReference>
<dbReference type="neXtProt" id="NX_O43543"/>
<dbReference type="OpenTargets" id="ENSG00000196584"/>
<dbReference type="Orphanet" id="84">
    <property type="disease" value="Fanconi anemia"/>
</dbReference>
<dbReference type="Orphanet" id="227535">
    <property type="disease" value="Hereditary breast cancer"/>
</dbReference>
<dbReference type="Orphanet" id="399805">
    <property type="disease" value="Male infertility with azoospermia or oligozoospermia due to single gene mutation"/>
</dbReference>
<dbReference type="PharmGKB" id="PA37421"/>
<dbReference type="VEuPathDB" id="HostDB:ENSG00000196584"/>
<dbReference type="eggNOG" id="KOG2859">
    <property type="taxonomic scope" value="Eukaryota"/>
</dbReference>
<dbReference type="GeneTree" id="ENSGT00390000020445"/>
<dbReference type="HOGENOM" id="CLU_059815_1_0_1"/>
<dbReference type="InParanoid" id="O43543"/>
<dbReference type="OMA" id="THRIFFS"/>
<dbReference type="OrthoDB" id="420422at2759"/>
<dbReference type="PAN-GO" id="O43543">
    <property type="GO annotations" value="6 GO annotations based on evolutionary models"/>
</dbReference>
<dbReference type="PhylomeDB" id="O43543"/>
<dbReference type="TreeFam" id="TF101202"/>
<dbReference type="PathwayCommons" id="O43543"/>
<dbReference type="Reactome" id="R-HSA-5685942">
    <property type="pathway name" value="HDR through Homologous Recombination (HRR)"/>
</dbReference>
<dbReference type="Reactome" id="R-HSA-5693554">
    <property type="pathway name" value="Resolution of D-loop Structures through Synthesis-Dependent Strand Annealing (SDSA)"/>
</dbReference>
<dbReference type="Reactome" id="R-HSA-5693568">
    <property type="pathway name" value="Resolution of D-loop Structures through Holliday Junction Intermediates"/>
</dbReference>
<dbReference type="Reactome" id="R-HSA-5693579">
    <property type="pathway name" value="Homologous DNA Pairing and Strand Exchange"/>
</dbReference>
<dbReference type="Reactome" id="R-HSA-5693616">
    <property type="pathway name" value="Presynaptic phase of homologous DNA pairing and strand exchange"/>
</dbReference>
<dbReference type="Reactome" id="R-HSA-9701192">
    <property type="pathway name" value="Defective homologous recombination repair (HRR) due to BRCA1 loss of function"/>
</dbReference>
<dbReference type="Reactome" id="R-HSA-9704331">
    <property type="pathway name" value="Defective HDR through Homologous Recombination Repair (HRR) due to PALB2 loss of BRCA1 binding function"/>
</dbReference>
<dbReference type="Reactome" id="R-HSA-9704646">
    <property type="pathway name" value="Defective HDR through Homologous Recombination Repair (HRR) due to PALB2 loss of BRCA2/RAD51/RAD51C binding function"/>
</dbReference>
<dbReference type="Reactome" id="R-HSA-9709603">
    <property type="pathway name" value="Impaired BRCA2 binding to PALB2"/>
</dbReference>
<dbReference type="SignaLink" id="O43543"/>
<dbReference type="BioGRID-ORCS" id="7516">
    <property type="hits" value="411 hits in 1169 CRISPR screens"/>
</dbReference>
<dbReference type="ChiTaRS" id="XRCC2">
    <property type="organism name" value="human"/>
</dbReference>
<dbReference type="GeneWiki" id="XRCC2"/>
<dbReference type="GenomeRNAi" id="7516"/>
<dbReference type="Pharos" id="O43543">
    <property type="development level" value="Tbio"/>
</dbReference>
<dbReference type="PRO" id="PR:O43543"/>
<dbReference type="Proteomes" id="UP000005640">
    <property type="component" value="Chromosome 7"/>
</dbReference>
<dbReference type="RNAct" id="O43543">
    <property type="molecule type" value="protein"/>
</dbReference>
<dbReference type="Bgee" id="ENSG00000196584">
    <property type="expression patterns" value="Expressed in buccal mucosa cell and 208 other cell types or tissues"/>
</dbReference>
<dbReference type="ExpressionAtlas" id="O43543">
    <property type="expression patterns" value="baseline and differential"/>
</dbReference>
<dbReference type="GO" id="GO:0005813">
    <property type="term" value="C:centrosome"/>
    <property type="evidence" value="ECO:0000314"/>
    <property type="project" value="UniProtKB"/>
</dbReference>
<dbReference type="GO" id="GO:0005737">
    <property type="term" value="C:cytoplasm"/>
    <property type="evidence" value="ECO:0007669"/>
    <property type="project" value="UniProtKB-KW"/>
</dbReference>
<dbReference type="GO" id="GO:0043231">
    <property type="term" value="C:intracellular membrane-bounded organelle"/>
    <property type="evidence" value="ECO:0000314"/>
    <property type="project" value="HPA"/>
</dbReference>
<dbReference type="GO" id="GO:0005654">
    <property type="term" value="C:nucleoplasm"/>
    <property type="evidence" value="ECO:0000314"/>
    <property type="project" value="HPA"/>
</dbReference>
<dbReference type="GO" id="GO:0033063">
    <property type="term" value="C:Rad51B-Rad51C-Rad51D-XRCC2 complex"/>
    <property type="evidence" value="ECO:0000314"/>
    <property type="project" value="UniProtKB"/>
</dbReference>
<dbReference type="GO" id="GO:0005657">
    <property type="term" value="C:replication fork"/>
    <property type="evidence" value="ECO:0000314"/>
    <property type="project" value="UniProtKB"/>
</dbReference>
<dbReference type="GO" id="GO:0005524">
    <property type="term" value="F:ATP binding"/>
    <property type="evidence" value="ECO:0007669"/>
    <property type="project" value="InterPro"/>
</dbReference>
<dbReference type="GO" id="GO:0140664">
    <property type="term" value="F:ATP-dependent DNA damage sensor activity"/>
    <property type="evidence" value="ECO:0007669"/>
    <property type="project" value="InterPro"/>
</dbReference>
<dbReference type="GO" id="GO:0003677">
    <property type="term" value="F:DNA binding"/>
    <property type="evidence" value="ECO:0007669"/>
    <property type="project" value="UniProtKB-KW"/>
</dbReference>
<dbReference type="GO" id="GO:0007098">
    <property type="term" value="P:centrosome cycle"/>
    <property type="evidence" value="ECO:0000315"/>
    <property type="project" value="UniProtKB"/>
</dbReference>
<dbReference type="GO" id="GO:0006281">
    <property type="term" value="P:DNA repair"/>
    <property type="evidence" value="ECO:0000316"/>
    <property type="project" value="BHF-UCL"/>
</dbReference>
<dbReference type="GO" id="GO:0042148">
    <property type="term" value="P:DNA strand invasion"/>
    <property type="evidence" value="ECO:0000314"/>
    <property type="project" value="UniProtKB"/>
</dbReference>
<dbReference type="GO" id="GO:0000724">
    <property type="term" value="P:double-strand break repair via homologous recombination"/>
    <property type="evidence" value="ECO:0000315"/>
    <property type="project" value="UniProtKB"/>
</dbReference>
<dbReference type="GO" id="GO:0001701">
    <property type="term" value="P:in utero embryonic development"/>
    <property type="evidence" value="ECO:0007669"/>
    <property type="project" value="Ensembl"/>
</dbReference>
<dbReference type="GO" id="GO:0051321">
    <property type="term" value="P:meiotic cell cycle"/>
    <property type="evidence" value="ECO:0000304"/>
    <property type="project" value="ProtInc"/>
</dbReference>
<dbReference type="GO" id="GO:0000278">
    <property type="term" value="P:mitotic cell cycle"/>
    <property type="evidence" value="ECO:0000315"/>
    <property type="project" value="UniProtKB"/>
</dbReference>
<dbReference type="GO" id="GO:0035264">
    <property type="term" value="P:multicellular organism growth"/>
    <property type="evidence" value="ECO:0007669"/>
    <property type="project" value="Ensembl"/>
</dbReference>
<dbReference type="GO" id="GO:0043524">
    <property type="term" value="P:negative regulation of neuron apoptotic process"/>
    <property type="evidence" value="ECO:0007669"/>
    <property type="project" value="Ensembl"/>
</dbReference>
<dbReference type="GO" id="GO:0022008">
    <property type="term" value="P:neurogenesis"/>
    <property type="evidence" value="ECO:0007669"/>
    <property type="project" value="Ensembl"/>
</dbReference>
<dbReference type="GO" id="GO:0050769">
    <property type="term" value="P:positive regulation of neurogenesis"/>
    <property type="evidence" value="ECO:0007669"/>
    <property type="project" value="Ensembl"/>
</dbReference>
<dbReference type="GO" id="GO:2000269">
    <property type="term" value="P:regulation of fibroblast apoptotic process"/>
    <property type="evidence" value="ECO:0007669"/>
    <property type="project" value="Ensembl"/>
</dbReference>
<dbReference type="GO" id="GO:0010332">
    <property type="term" value="P:response to gamma radiation"/>
    <property type="evidence" value="ECO:0007669"/>
    <property type="project" value="Ensembl"/>
</dbReference>
<dbReference type="GO" id="GO:0010165">
    <property type="term" value="P:response to X-ray"/>
    <property type="evidence" value="ECO:0007669"/>
    <property type="project" value="Ensembl"/>
</dbReference>
<dbReference type="GO" id="GO:0001756">
    <property type="term" value="P:somitogenesis"/>
    <property type="evidence" value="ECO:0007669"/>
    <property type="project" value="Ensembl"/>
</dbReference>
<dbReference type="CDD" id="cd19490">
    <property type="entry name" value="XRCC2"/>
    <property type="match status" value="1"/>
</dbReference>
<dbReference type="FunFam" id="3.40.50.300:FF:001507">
    <property type="entry name" value="X-ray repair cross complementing 2"/>
    <property type="match status" value="1"/>
</dbReference>
<dbReference type="Gene3D" id="3.40.50.300">
    <property type="entry name" value="P-loop containing nucleotide triphosphate hydrolases"/>
    <property type="match status" value="1"/>
</dbReference>
<dbReference type="InterPro" id="IPR013632">
    <property type="entry name" value="DNA_recomb/repair_Rad51_C"/>
</dbReference>
<dbReference type="InterPro" id="IPR027417">
    <property type="entry name" value="P-loop_NTPase"/>
</dbReference>
<dbReference type="InterPro" id="IPR020588">
    <property type="entry name" value="RecA_ATP-bd"/>
</dbReference>
<dbReference type="InterPro" id="IPR030547">
    <property type="entry name" value="XRCC2"/>
</dbReference>
<dbReference type="PANTHER" id="PTHR46644">
    <property type="entry name" value="DNA REPAIR PROTEIN XRCC2"/>
    <property type="match status" value="1"/>
</dbReference>
<dbReference type="PANTHER" id="PTHR46644:SF2">
    <property type="entry name" value="DNA REPAIR PROTEIN XRCC2"/>
    <property type="match status" value="1"/>
</dbReference>
<dbReference type="Pfam" id="PF08423">
    <property type="entry name" value="Rad51"/>
    <property type="match status" value="1"/>
</dbReference>
<dbReference type="SUPFAM" id="SSF52540">
    <property type="entry name" value="P-loop containing nucleoside triphosphate hydrolases"/>
    <property type="match status" value="1"/>
</dbReference>
<dbReference type="PROSITE" id="PS50162">
    <property type="entry name" value="RECA_2"/>
    <property type="match status" value="1"/>
</dbReference>
<evidence type="ECO:0000269" key="1">
    <source>
    </source>
</evidence>
<evidence type="ECO:0000269" key="2">
    <source>
    </source>
</evidence>
<evidence type="ECO:0000269" key="3">
    <source>
    </source>
</evidence>
<evidence type="ECO:0000269" key="4">
    <source>
    </source>
</evidence>
<evidence type="ECO:0000269" key="5">
    <source>
    </source>
</evidence>
<evidence type="ECO:0000269" key="6">
    <source>
    </source>
</evidence>
<evidence type="ECO:0000269" key="7">
    <source>
    </source>
</evidence>
<evidence type="ECO:0000269" key="8">
    <source>
    </source>
</evidence>
<evidence type="ECO:0000269" key="9">
    <source>
    </source>
</evidence>
<evidence type="ECO:0000269" key="10">
    <source>
    </source>
</evidence>
<evidence type="ECO:0000269" key="11">
    <source>
    </source>
</evidence>
<evidence type="ECO:0000269" key="12">
    <source>
    </source>
</evidence>
<evidence type="ECO:0000269" key="13">
    <source>
    </source>
</evidence>
<evidence type="ECO:0000269" key="14">
    <source>
    </source>
</evidence>
<evidence type="ECO:0000269" key="15">
    <source>
    </source>
</evidence>
<evidence type="ECO:0000269" key="16">
    <source ref="4"/>
</evidence>
<evidence type="ECO:0000305" key="17"/>
<evidence type="ECO:0007744" key="18">
    <source>
    </source>
</evidence>
<evidence type="ECO:0007829" key="19">
    <source>
        <dbReference type="PDB" id="8GBJ"/>
    </source>
</evidence>
<evidence type="ECO:0007829" key="20">
    <source>
        <dbReference type="PDB" id="8OUY"/>
    </source>
</evidence>
<evidence type="ECO:0007829" key="21">
    <source>
        <dbReference type="PDB" id="8OUZ"/>
    </source>
</evidence>
<protein>
    <recommendedName>
        <fullName>DNA repair protein XRCC2</fullName>
    </recommendedName>
    <alternativeName>
        <fullName>X-ray repair cross-complementing protein 2</fullName>
    </alternativeName>
</protein>
<feature type="chain" id="PRO_0000122948" description="DNA repair protein XRCC2">
    <location>
        <begin position="1"/>
        <end position="280"/>
    </location>
</feature>
<feature type="modified residue" description="Phosphoserine" evidence="18">
    <location>
        <position position="10"/>
    </location>
</feature>
<feature type="sequence variant" id="VAR_085247" description="In SPGF50 and POF17; due to a nucleotide substitution that causes partial exon 2 skipping; patient cells contain both normally spliced transcripts and transcripts lacking exon 2; dbSNP:rs757140620." evidence="13 15">
    <original>L</original>
    <variation>P</variation>
    <location>
        <position position="14"/>
    </location>
</feature>
<feature type="sequence variant" id="VAR_020403" description="Does not affect function in double-strand break repair via homologous recombination as shown in rescue assays of XRCC2-deficient cells; dbSNP:rs4987090." evidence="9 12">
    <original>A</original>
    <variation>S</variation>
    <location>
        <position position="16"/>
    </location>
</feature>
<feature type="sequence variant" id="VAR_077167" description="Does not affect function in double-strand break repair via homologous recombination as shown in rescue assays of XRCC2-deficient cells; dbSNP:rs587780126." evidence="10 12">
    <original>H</original>
    <variation>R</variation>
    <location>
        <position position="47"/>
    </location>
</feature>
<feature type="sequence variant" id="VAR_077168" description="Does not affect function in double-strand break repair via homologous recombination as shown in rescue assays of XRCC2-deficient cells; dbSNP:rs569810249." evidence="9 12">
    <original>L</original>
    <variation>I</variation>
    <location>
        <position position="61"/>
    </location>
</feature>
<feature type="sequence variant" id="VAR_077169" description="Does not affect function in double-strand break repair via homologous recombination as shown in rescue assays of XRCC2-deficient cells; dbSNP:rs1327414828." evidence="10 12">
    <original>E</original>
    <variation>Q</variation>
    <location>
        <position position="75"/>
    </location>
</feature>
<feature type="sequence variant" id="VAR_077170" description="Rare variant; found in breast cancer; uncertain significance; moderately decreased function in double-strand break repair via homologous recombination as shown in rescue assays of XRCC2-deficient cells; dbSNP:rs730882043." evidence="9 12">
    <original>R</original>
    <variation>W</variation>
    <location>
        <position position="91"/>
    </location>
</feature>
<feature type="sequence variant" id="VAR_077171" description="Does not affect function in double-strand break repair via homologous recombination as shown in rescue assays of XRCC2-deficient cells; dbSNP:rs140214637." evidence="9 10 12">
    <original>I</original>
    <variation>V</variation>
    <location>
        <position position="95"/>
    </location>
</feature>
<feature type="sequence variant" id="VAR_077172" description="Does not affect function in double-strand break repair via homologous recombination as shown in rescue assays of XRCC2-deficient cells; dbSNP:rs185815454." evidence="10 12">
    <original>V</original>
    <variation>A</variation>
    <location>
        <position position="118"/>
    </location>
</feature>
<feature type="sequence variant" id="VAR_077173" description="Rare variant; found in breast cancer; uncertain significance; moderately decreased function in double-strand break repair via homologous recombination as shown in rescue assays of XRCC2-deficient cells; dbSNP:rs1432878196." evidence="10 12">
    <original>C</original>
    <variation>Y</variation>
    <location>
        <position position="120"/>
    </location>
</feature>
<feature type="sequence variant" id="VAR_077174" description="Rare variant; found in breast cancer; uncertain significance; moderately decreased function in double-strand break repair via homologous recombination as shown in rescue assays of XRCC2-deficient cells; dbSNP:rs765276614." evidence="10 12">
    <original>L</original>
    <variation>P</variation>
    <location>
        <position position="133"/>
    </location>
</feature>
<feature type="sequence variant" id="VAR_077175" description="Does not affect function in double-strand break repair via homologous recombination as shown in rescue assays of XRCC2-deficient cells; dbSNP:rs1215678098." evidence="10 12">
    <original>E</original>
    <variation>Q</variation>
    <location>
        <position position="164"/>
    </location>
</feature>
<feature type="sequence variant" id="VAR_077176" description="Does not affect function in double-strand break repair via homologous recombination as shown in rescue assays of XRCC2-deficient cells; dbSNP:rs778143946." evidence="10 12">
    <original>E</original>
    <variation>A</variation>
    <location>
        <position position="170"/>
    </location>
</feature>
<feature type="sequence variant" id="VAR_077177" description="Does not affect function in double-strand break repair via homologous recombination as shown in rescue assays of XRCC2-deficient cells; dbSNP:rs139219364." evidence="10 12">
    <original>R</original>
    <variation>C</variation>
    <location>
        <position position="188"/>
    </location>
</feature>
<feature type="sequence variant" id="VAR_020404" description="Does not affect function in double-strand break repair via homologous recombination as shown in rescue assays of XRCC2-deficient cells; dbSNP:rs3218536." evidence="12 16">
    <original>R</original>
    <variation>H</variation>
    <location>
        <position position="188"/>
    </location>
</feature>
<feature type="sequence variant" id="VAR_077178" description="Does not affect function in double-strand break repair via homologous recombination as shown in rescue assays of XRCC2-deficient cells; dbSNP:rs775565256." evidence="10 12">
    <original>T</original>
    <variation>M</variation>
    <location>
        <position position="194"/>
    </location>
</feature>
<feature type="sequence variant" id="VAR_077179" description="Found in patients with breast cancer; likely benign; does not affect function in double-strand break repair via homologous recombination as shown in rescue assays of XRCC2-deficient cells; dbSNP:rs2098027257." evidence="10 12">
    <original>M</original>
    <variation>L</variation>
    <location>
        <position position="199"/>
    </location>
</feature>
<feature type="sequence variant" id="VAR_077180" description="Does not affect function in double-strand break repair via homologous recombination as shown in rescue assays of XRCC2-deficient cells; dbSNP:rs61762969." evidence="10 12">
    <original>E</original>
    <variation>G</variation>
    <location>
        <position position="207"/>
    </location>
</feature>
<feature type="sequence variant" id="VAR_082157" description="Found in a patient with borderline microcephaly, bilateral hypoplastic thumb, multiple cafe late spots, strabismus and dysmorphic facial features; uncertain significance." evidence="14">
    <location>
        <begin position="215"/>
        <end position="280"/>
    </location>
</feature>
<feature type="sequence variant" id="VAR_077181" description="Does not affect function in double-strand break repair via homologous recombination as shown in rescue assays of XRCC2-deficient cells; dbSNP:rs765021741." evidence="10 12">
    <original>D</original>
    <variation>V</variation>
    <location>
        <position position="220"/>
    </location>
</feature>
<feature type="sequence variant" id="VAR_029294" description="In dbSNP:rs3218537." evidence="16">
    <original>I</original>
    <variation>T</variation>
    <location>
        <position position="221"/>
    </location>
</feature>
<feature type="sequence variant" id="VAR_077182" description="Does not affect function in double-strand break repair via homologous recombination as shown in rescue assays of XRCC2-deficient cells; dbSNP:rs1267462913." evidence="9 12">
    <original>W</original>
    <variation>C</variation>
    <location>
        <position position="231"/>
    </location>
</feature>
<feature type="sequence variant" id="VAR_077183" description="Does not affect function in double-strand break repair via homologous recombination as shown in rescue assays of XRCC2-deficient cells; dbSNP:rs534746330." evidence="10 12">
    <original>R</original>
    <variation>S</variation>
    <location>
        <position position="238"/>
    </location>
</feature>
<feature type="sequence variant" id="VAR_077184" description="Does not affect function in double-strand break repair via homologous recombination as shown in rescue assays of XRCC2-deficient cells; dbSNP:rs190900560." evidence="10 12">
    <original>Q</original>
    <variation>E</variation>
    <location>
        <position position="248"/>
    </location>
</feature>
<feature type="sequence variant" id="VAR_077185" description="Does not affect function in double-strand break repair via homologous recombination as shown in rescue assays of XRCC2-deficient cells; dbSNP:rs759300252." evidence="10 12">
    <original>R</original>
    <variation>C</variation>
    <location>
        <position position="258"/>
    </location>
</feature>
<feature type="sequence variant" id="VAR_077186" description="Does not affect function in double-strand break repair via homologous recombination as shown in rescue assays of XRCC2-deficient cells; dbSNP:rs145085742." evidence="9 10 12">
    <original>F</original>
    <variation>V</variation>
    <location>
        <position position="270"/>
    </location>
</feature>
<feature type="helix" evidence="21">
    <location>
        <begin position="24"/>
        <end position="27"/>
    </location>
</feature>
<feature type="turn" evidence="21">
    <location>
        <begin position="29"/>
        <end position="31"/>
    </location>
</feature>
<feature type="strand" evidence="21">
    <location>
        <begin position="40"/>
        <end position="48"/>
    </location>
</feature>
<feature type="strand" evidence="20">
    <location>
        <begin position="50"/>
        <end position="53"/>
    </location>
</feature>
<feature type="helix" evidence="21">
    <location>
        <begin position="54"/>
        <end position="66"/>
    </location>
</feature>
<feature type="helix" evidence="21">
    <location>
        <begin position="69"/>
        <end position="71"/>
    </location>
</feature>
<feature type="strand" evidence="21">
    <location>
        <begin position="77"/>
        <end position="85"/>
    </location>
</feature>
<feature type="helix" evidence="21">
    <location>
        <begin position="89"/>
        <end position="99"/>
    </location>
</feature>
<feature type="strand" evidence="19">
    <location>
        <begin position="100"/>
        <end position="102"/>
    </location>
</feature>
<feature type="helix" evidence="21">
    <location>
        <begin position="105"/>
        <end position="112"/>
    </location>
</feature>
<feature type="strand" evidence="21">
    <location>
        <begin position="115"/>
        <end position="119"/>
    </location>
</feature>
<feature type="helix" evidence="21">
    <location>
        <begin position="123"/>
        <end position="139"/>
    </location>
</feature>
<feature type="strand" evidence="21">
    <location>
        <begin position="143"/>
        <end position="149"/>
    </location>
</feature>
<feature type="turn" evidence="21">
    <location>
        <begin position="151"/>
        <end position="154"/>
    </location>
</feature>
<feature type="helix" evidence="21">
    <location>
        <begin position="155"/>
        <end position="162"/>
    </location>
</feature>
<feature type="helix" evidence="21">
    <location>
        <begin position="166"/>
        <end position="169"/>
    </location>
</feature>
<feature type="helix" evidence="21">
    <location>
        <begin position="171"/>
        <end position="186"/>
    </location>
</feature>
<feature type="strand" evidence="21">
    <location>
        <begin position="190"/>
        <end position="196"/>
    </location>
</feature>
<feature type="helix" evidence="21">
    <location>
        <begin position="229"/>
        <end position="232"/>
    </location>
</feature>
<feature type="strand" evidence="21">
    <location>
        <begin position="237"/>
        <end position="243"/>
    </location>
</feature>
<feature type="strand" evidence="21">
    <location>
        <begin position="253"/>
        <end position="259"/>
    </location>
</feature>
<feature type="turn" evidence="21">
    <location>
        <begin position="260"/>
        <end position="262"/>
    </location>
</feature>
<feature type="strand" evidence="21">
    <location>
        <begin position="265"/>
        <end position="273"/>
    </location>
</feature>
<feature type="strand" evidence="21">
    <location>
        <begin position="276"/>
        <end position="279"/>
    </location>
</feature>
<organism>
    <name type="scientific">Homo sapiens</name>
    <name type="common">Human</name>
    <dbReference type="NCBI Taxonomy" id="9606"/>
    <lineage>
        <taxon>Eukaryota</taxon>
        <taxon>Metazoa</taxon>
        <taxon>Chordata</taxon>
        <taxon>Craniata</taxon>
        <taxon>Vertebrata</taxon>
        <taxon>Euteleostomi</taxon>
        <taxon>Mammalia</taxon>
        <taxon>Eutheria</taxon>
        <taxon>Euarchontoglires</taxon>
        <taxon>Primates</taxon>
        <taxon>Haplorrhini</taxon>
        <taxon>Catarrhini</taxon>
        <taxon>Hominidae</taxon>
        <taxon>Homo</taxon>
    </lineage>
</organism>
<name>XRCC2_HUMAN</name>
<proteinExistence type="evidence at protein level"/>
<gene>
    <name type="primary">XRCC2</name>
</gene>
<sequence length="280" mass="31956">MCSAFHRAESGTELLARLEGRSSLKEIEPNLFADEDSPVHGDILEFHGPEGTGKTEMLYHLTARCILPKSEGGLEVEVLFIDTDYHFDMLRLVTILEHRLSQSSEEIIKYCLGRFFLVYCSSSTHLLLTLYSLESMFCSHPSLCLLILDSLSAFYWIDRVNGGESVNLQESTLRKCSQCLEKLVNDYRLVLFATTQTIMQKASSSSEEPSHASRRLCDVDIDYRPYLCKAWQQLVKHRMFFSKQDDSQSSNQFSLVSRCLKSNSLKKHFFIIGESGVEFC</sequence>